<evidence type="ECO:0000255" key="1">
    <source>
        <dbReference type="HAMAP-Rule" id="MF_00031"/>
    </source>
</evidence>
<dbReference type="EMBL" id="AM884176">
    <property type="protein sequence ID" value="CAP04201.1"/>
    <property type="molecule type" value="Genomic_DNA"/>
</dbReference>
<dbReference type="RefSeq" id="WP_009873862.1">
    <property type="nucleotide sequence ID" value="NC_010287.1"/>
</dbReference>
<dbReference type="RefSeq" id="YP_001654834.1">
    <property type="nucleotide sequence ID" value="NC_010287.1"/>
</dbReference>
<dbReference type="SMR" id="B0B875"/>
<dbReference type="KEGG" id="ctb:CTL0763"/>
<dbReference type="PATRIC" id="fig|471472.4.peg.819"/>
<dbReference type="HOGENOM" id="CLU_087936_3_0_0"/>
<dbReference type="Proteomes" id="UP001154402">
    <property type="component" value="Chromosome"/>
</dbReference>
<dbReference type="GO" id="GO:0005737">
    <property type="term" value="C:cytoplasm"/>
    <property type="evidence" value="ECO:0007669"/>
    <property type="project" value="UniProtKB-SubCell"/>
</dbReference>
<dbReference type="GO" id="GO:0009379">
    <property type="term" value="C:Holliday junction helicase complex"/>
    <property type="evidence" value="ECO:0007669"/>
    <property type="project" value="InterPro"/>
</dbReference>
<dbReference type="GO" id="GO:0048476">
    <property type="term" value="C:Holliday junction resolvase complex"/>
    <property type="evidence" value="ECO:0007669"/>
    <property type="project" value="UniProtKB-UniRule"/>
</dbReference>
<dbReference type="GO" id="GO:0005524">
    <property type="term" value="F:ATP binding"/>
    <property type="evidence" value="ECO:0007669"/>
    <property type="project" value="InterPro"/>
</dbReference>
<dbReference type="GO" id="GO:0000400">
    <property type="term" value="F:four-way junction DNA binding"/>
    <property type="evidence" value="ECO:0007669"/>
    <property type="project" value="UniProtKB-UniRule"/>
</dbReference>
<dbReference type="GO" id="GO:0009378">
    <property type="term" value="F:four-way junction helicase activity"/>
    <property type="evidence" value="ECO:0007669"/>
    <property type="project" value="InterPro"/>
</dbReference>
<dbReference type="GO" id="GO:0006310">
    <property type="term" value="P:DNA recombination"/>
    <property type="evidence" value="ECO:0007669"/>
    <property type="project" value="UniProtKB-UniRule"/>
</dbReference>
<dbReference type="GO" id="GO:0006281">
    <property type="term" value="P:DNA repair"/>
    <property type="evidence" value="ECO:0007669"/>
    <property type="project" value="UniProtKB-UniRule"/>
</dbReference>
<dbReference type="CDD" id="cd14332">
    <property type="entry name" value="UBA_RuvA_C"/>
    <property type="match status" value="1"/>
</dbReference>
<dbReference type="Gene3D" id="1.10.150.20">
    <property type="entry name" value="5' to 3' exonuclease, C-terminal subdomain"/>
    <property type="match status" value="1"/>
</dbReference>
<dbReference type="Gene3D" id="1.10.8.10">
    <property type="entry name" value="DNA helicase RuvA subunit, C-terminal domain"/>
    <property type="match status" value="1"/>
</dbReference>
<dbReference type="Gene3D" id="2.40.50.140">
    <property type="entry name" value="Nucleic acid-binding proteins"/>
    <property type="match status" value="1"/>
</dbReference>
<dbReference type="HAMAP" id="MF_00031">
    <property type="entry name" value="DNA_HJ_migration_RuvA"/>
    <property type="match status" value="1"/>
</dbReference>
<dbReference type="InterPro" id="IPR013849">
    <property type="entry name" value="DNA_helicase_Holl-junc_RuvA_I"/>
</dbReference>
<dbReference type="InterPro" id="IPR003583">
    <property type="entry name" value="Hlx-hairpin-Hlx_DNA-bd_motif"/>
</dbReference>
<dbReference type="InterPro" id="IPR012340">
    <property type="entry name" value="NA-bd_OB-fold"/>
</dbReference>
<dbReference type="InterPro" id="IPR000085">
    <property type="entry name" value="RuvA"/>
</dbReference>
<dbReference type="InterPro" id="IPR010994">
    <property type="entry name" value="RuvA_2-like"/>
</dbReference>
<dbReference type="InterPro" id="IPR011114">
    <property type="entry name" value="RuvA_C"/>
</dbReference>
<dbReference type="NCBIfam" id="TIGR00084">
    <property type="entry name" value="ruvA"/>
    <property type="match status" value="1"/>
</dbReference>
<dbReference type="Pfam" id="PF14520">
    <property type="entry name" value="HHH_5"/>
    <property type="match status" value="1"/>
</dbReference>
<dbReference type="Pfam" id="PF01330">
    <property type="entry name" value="RuvA_N"/>
    <property type="match status" value="1"/>
</dbReference>
<dbReference type="SMART" id="SM00278">
    <property type="entry name" value="HhH1"/>
    <property type="match status" value="2"/>
</dbReference>
<dbReference type="SUPFAM" id="SSF50249">
    <property type="entry name" value="Nucleic acid-binding proteins"/>
    <property type="match status" value="1"/>
</dbReference>
<dbReference type="SUPFAM" id="SSF47781">
    <property type="entry name" value="RuvA domain 2-like"/>
    <property type="match status" value="1"/>
</dbReference>
<comment type="function">
    <text evidence="1">The RuvA-RuvB-RuvC complex processes Holliday junction (HJ) DNA during genetic recombination and DNA repair, while the RuvA-RuvB complex plays an important role in the rescue of blocked DNA replication forks via replication fork reversal (RFR). RuvA specifically binds to HJ cruciform DNA, conferring on it an open structure. The RuvB hexamer acts as an ATP-dependent pump, pulling dsDNA into and through the RuvAB complex. HJ branch migration allows RuvC to scan DNA until it finds its consensus sequence, where it cleaves and resolves the cruciform DNA.</text>
</comment>
<comment type="subunit">
    <text evidence="1">Homotetramer. Forms an RuvA(8)-RuvB(12)-Holliday junction (HJ) complex. HJ DNA is sandwiched between 2 RuvA tetramers; dsDNA enters through RuvA and exits via RuvB. An RuvB hexamer assembles on each DNA strand where it exits the tetramer. Each RuvB hexamer is contacted by two RuvA subunits (via domain III) on 2 adjacent RuvB subunits; this complex drives branch migration. In the full resolvosome a probable DNA-RuvA(4)-RuvB(12)-RuvC(2) complex forms which resolves the HJ.</text>
</comment>
<comment type="subcellular location">
    <subcellularLocation>
        <location evidence="1">Cytoplasm</location>
    </subcellularLocation>
</comment>
<comment type="domain">
    <text evidence="1">Has three domains with a flexible linker between the domains II and III and assumes an 'L' shape. Domain III is highly mobile and contacts RuvB.</text>
</comment>
<comment type="similarity">
    <text evidence="1">Belongs to the RuvA family.</text>
</comment>
<proteinExistence type="inferred from homology"/>
<feature type="chain" id="PRO_1000090299" description="Holliday junction branch migration complex subunit RuvA">
    <location>
        <begin position="1"/>
        <end position="200"/>
    </location>
</feature>
<feature type="region of interest" description="Domain I" evidence="1">
    <location>
        <begin position="1"/>
        <end position="65"/>
    </location>
</feature>
<feature type="region of interest" description="Domain II" evidence="1">
    <location>
        <begin position="66"/>
        <end position="144"/>
    </location>
</feature>
<feature type="region of interest" description="Flexible linker" evidence="1">
    <location>
        <begin position="145"/>
        <end position="149"/>
    </location>
</feature>
<feature type="region of interest" description="Domain III" evidence="1">
    <location>
        <begin position="150"/>
        <end position="200"/>
    </location>
</feature>
<gene>
    <name evidence="1" type="primary">ruvA</name>
    <name type="ordered locus">CTL0763</name>
</gene>
<accession>B0B875</accession>
<reference key="1">
    <citation type="journal article" date="2008" name="Genome Res.">
        <title>Chlamydia trachomatis: genome sequence analysis of lymphogranuloma venereum isolates.</title>
        <authorList>
            <person name="Thomson N.R."/>
            <person name="Holden M.T.G."/>
            <person name="Carder C."/>
            <person name="Lennard N."/>
            <person name="Lockey S.J."/>
            <person name="Marsh P."/>
            <person name="Skipp P."/>
            <person name="O'Connor C.D."/>
            <person name="Goodhead I."/>
            <person name="Norbertzcak H."/>
            <person name="Harris B."/>
            <person name="Ormond D."/>
            <person name="Rance R."/>
            <person name="Quail M.A."/>
            <person name="Parkhill J."/>
            <person name="Stephens R.S."/>
            <person name="Clarke I.N."/>
        </authorList>
    </citation>
    <scope>NUCLEOTIDE SEQUENCE [LARGE SCALE GENOMIC DNA]</scope>
    <source>
        <strain>ATCC VR-902B / DSM 19102 / 434/Bu</strain>
    </source>
</reference>
<name>RUVA_CHLT2</name>
<sequence length="200" mass="22222">MYEYIKGTLTHIDGSYVVIESFGIGYAIMLSERFLVDLRAFMHQEVLIYVHSVIRETEHVLYGFSSRAERECFRLLISFSGIGPKTGLSILNMFPLQELCSIARLENVKAIASVPGIGKKTAEKLMVDLKQKLPTLMPLYLEEPVVPSSTANSSFKEGIGALMNLGFSRLAADRMMTEAVKELSEEASVAELLPIALRKS</sequence>
<organism>
    <name type="scientific">Chlamydia trachomatis serovar L2 (strain ATCC VR-902B / DSM 19102 / 434/Bu)</name>
    <dbReference type="NCBI Taxonomy" id="471472"/>
    <lineage>
        <taxon>Bacteria</taxon>
        <taxon>Pseudomonadati</taxon>
        <taxon>Chlamydiota</taxon>
        <taxon>Chlamydiia</taxon>
        <taxon>Chlamydiales</taxon>
        <taxon>Chlamydiaceae</taxon>
        <taxon>Chlamydia/Chlamydophila group</taxon>
        <taxon>Chlamydia</taxon>
    </lineage>
</organism>
<keyword id="KW-0963">Cytoplasm</keyword>
<keyword id="KW-0227">DNA damage</keyword>
<keyword id="KW-0233">DNA recombination</keyword>
<keyword id="KW-0234">DNA repair</keyword>
<keyword id="KW-0238">DNA-binding</keyword>
<protein>
    <recommendedName>
        <fullName evidence="1">Holliday junction branch migration complex subunit RuvA</fullName>
    </recommendedName>
</protein>